<sequence length="371" mass="39155">MPLYIGLMSGTSLDGIDAALVRCGEGRPEWLGATGLPFSAALHDDLLALCLAREVSFAELARLETAFCERQAEAVNRLLLETGTPREAITAIGSHGQTIEHAPNATPAHTYQLDNPSLLAELTGCAVVGDLRRRDLAAGGQAAPLAPAFHAALFTASEAYRLVLNLGGIANLTRLPPSGQAAPVVGFDTGPANMLMDAWSQRHLGHPYDADGAWAASGRVDDALLARLLDDDYFSRLPPKSTGREHFHLDWLTSRLSGHESPCDVQATLAELTAASIAMGVTQCSAGVSTAYDALIPCGGGAHNADLLTRIQRHLPEIPLTPCERFGWSPDWLEAGAFAWLAHQRVAGLPGNLPDVTGARGPRVLGGLYAG</sequence>
<feature type="chain" id="PRO_0000249993" description="Anhydro-N-acetylmuramic acid kinase">
    <location>
        <begin position="1"/>
        <end position="371"/>
    </location>
</feature>
<feature type="binding site" evidence="1">
    <location>
        <begin position="10"/>
        <end position="17"/>
    </location>
    <ligand>
        <name>ATP</name>
        <dbReference type="ChEBI" id="CHEBI:30616"/>
    </ligand>
</feature>
<comment type="function">
    <text evidence="1">Catalyzes the specific phosphorylation of 1,6-anhydro-N-acetylmuramic acid (anhMurNAc) with the simultaneous cleavage of the 1,6-anhydro ring, generating MurNAc-6-P. Is required for the utilization of anhMurNAc either imported from the medium or derived from its own cell wall murein, and thus plays a role in cell wall recycling.</text>
</comment>
<comment type="catalytic activity">
    <reaction evidence="1">
        <text>1,6-anhydro-N-acetyl-beta-muramate + ATP + H2O = N-acetyl-D-muramate 6-phosphate + ADP + H(+)</text>
        <dbReference type="Rhea" id="RHEA:24952"/>
        <dbReference type="ChEBI" id="CHEBI:15377"/>
        <dbReference type="ChEBI" id="CHEBI:15378"/>
        <dbReference type="ChEBI" id="CHEBI:30616"/>
        <dbReference type="ChEBI" id="CHEBI:58690"/>
        <dbReference type="ChEBI" id="CHEBI:58722"/>
        <dbReference type="ChEBI" id="CHEBI:456216"/>
        <dbReference type="EC" id="2.7.1.170"/>
    </reaction>
</comment>
<comment type="pathway">
    <text evidence="1">Amino-sugar metabolism; 1,6-anhydro-N-acetylmuramate degradation.</text>
</comment>
<comment type="pathway">
    <text evidence="1">Cell wall biogenesis; peptidoglycan recycling.</text>
</comment>
<comment type="similarity">
    <text evidence="1">Belongs to the anhydro-N-acetylmuramic acid kinase family.</text>
</comment>
<gene>
    <name evidence="1" type="primary">anmK</name>
    <name type="ordered locus">Csal_3051</name>
</gene>
<dbReference type="EC" id="2.7.1.170" evidence="1"/>
<dbReference type="EMBL" id="CP000285">
    <property type="protein sequence ID" value="ABE60395.1"/>
    <property type="molecule type" value="Genomic_DNA"/>
</dbReference>
<dbReference type="RefSeq" id="WP_011508341.1">
    <property type="nucleotide sequence ID" value="NC_007963.1"/>
</dbReference>
<dbReference type="SMR" id="Q1QT13"/>
<dbReference type="STRING" id="290398.Csal_3051"/>
<dbReference type="GeneID" id="95335745"/>
<dbReference type="KEGG" id="csa:Csal_3051"/>
<dbReference type="eggNOG" id="COG2377">
    <property type="taxonomic scope" value="Bacteria"/>
</dbReference>
<dbReference type="HOGENOM" id="CLU_038782_0_0_6"/>
<dbReference type="OrthoDB" id="9763949at2"/>
<dbReference type="UniPathway" id="UPA00343"/>
<dbReference type="UniPathway" id="UPA00544"/>
<dbReference type="Proteomes" id="UP000000239">
    <property type="component" value="Chromosome"/>
</dbReference>
<dbReference type="GO" id="GO:0005524">
    <property type="term" value="F:ATP binding"/>
    <property type="evidence" value="ECO:0007669"/>
    <property type="project" value="UniProtKB-UniRule"/>
</dbReference>
<dbReference type="GO" id="GO:0016301">
    <property type="term" value="F:kinase activity"/>
    <property type="evidence" value="ECO:0007669"/>
    <property type="project" value="UniProtKB-KW"/>
</dbReference>
<dbReference type="GO" id="GO:0016773">
    <property type="term" value="F:phosphotransferase activity, alcohol group as acceptor"/>
    <property type="evidence" value="ECO:0007669"/>
    <property type="project" value="UniProtKB-UniRule"/>
</dbReference>
<dbReference type="GO" id="GO:0097175">
    <property type="term" value="P:1,6-anhydro-N-acetyl-beta-muramic acid catabolic process"/>
    <property type="evidence" value="ECO:0007669"/>
    <property type="project" value="UniProtKB-UniRule"/>
</dbReference>
<dbReference type="GO" id="GO:0006040">
    <property type="term" value="P:amino sugar metabolic process"/>
    <property type="evidence" value="ECO:0007669"/>
    <property type="project" value="InterPro"/>
</dbReference>
<dbReference type="GO" id="GO:0009254">
    <property type="term" value="P:peptidoglycan turnover"/>
    <property type="evidence" value="ECO:0007669"/>
    <property type="project" value="UniProtKB-UniRule"/>
</dbReference>
<dbReference type="CDD" id="cd24050">
    <property type="entry name" value="ASKHA_NBD_ANMK"/>
    <property type="match status" value="1"/>
</dbReference>
<dbReference type="Gene3D" id="3.30.420.40">
    <property type="match status" value="2"/>
</dbReference>
<dbReference type="HAMAP" id="MF_01270">
    <property type="entry name" value="AnhMurNAc_kinase"/>
    <property type="match status" value="1"/>
</dbReference>
<dbReference type="InterPro" id="IPR005338">
    <property type="entry name" value="Anhydro_N_Ac-Mur_kinase"/>
</dbReference>
<dbReference type="InterPro" id="IPR043129">
    <property type="entry name" value="ATPase_NBD"/>
</dbReference>
<dbReference type="NCBIfam" id="NF007139">
    <property type="entry name" value="PRK09585.1-3"/>
    <property type="match status" value="1"/>
</dbReference>
<dbReference type="PANTHER" id="PTHR30605">
    <property type="entry name" value="ANHYDRO-N-ACETYLMURAMIC ACID KINASE"/>
    <property type="match status" value="1"/>
</dbReference>
<dbReference type="PANTHER" id="PTHR30605:SF0">
    <property type="entry name" value="ANHYDRO-N-ACETYLMURAMIC ACID KINASE"/>
    <property type="match status" value="1"/>
</dbReference>
<dbReference type="Pfam" id="PF03702">
    <property type="entry name" value="AnmK"/>
    <property type="match status" value="1"/>
</dbReference>
<dbReference type="SUPFAM" id="SSF53067">
    <property type="entry name" value="Actin-like ATPase domain"/>
    <property type="match status" value="1"/>
</dbReference>
<evidence type="ECO:0000255" key="1">
    <source>
        <dbReference type="HAMAP-Rule" id="MF_01270"/>
    </source>
</evidence>
<organism>
    <name type="scientific">Chromohalobacter salexigens (strain ATCC BAA-138 / DSM 3043 / CIP 106854 / NCIMB 13768 / 1H11)</name>
    <dbReference type="NCBI Taxonomy" id="290398"/>
    <lineage>
        <taxon>Bacteria</taxon>
        <taxon>Pseudomonadati</taxon>
        <taxon>Pseudomonadota</taxon>
        <taxon>Gammaproteobacteria</taxon>
        <taxon>Oceanospirillales</taxon>
        <taxon>Halomonadaceae</taxon>
        <taxon>Chromohalobacter</taxon>
    </lineage>
</organism>
<accession>Q1QT13</accession>
<name>ANMK_CHRSD</name>
<protein>
    <recommendedName>
        <fullName evidence="1">Anhydro-N-acetylmuramic acid kinase</fullName>
        <ecNumber evidence="1">2.7.1.170</ecNumber>
    </recommendedName>
    <alternativeName>
        <fullName evidence="1">AnhMurNAc kinase</fullName>
    </alternativeName>
</protein>
<proteinExistence type="inferred from homology"/>
<reference key="1">
    <citation type="journal article" date="2011" name="Stand. Genomic Sci.">
        <title>Complete genome sequence of the halophilic and highly halotolerant Chromohalobacter salexigens type strain (1H11(T)).</title>
        <authorList>
            <person name="Copeland A."/>
            <person name="O'Connor K."/>
            <person name="Lucas S."/>
            <person name="Lapidus A."/>
            <person name="Berry K.W."/>
            <person name="Detter J.C."/>
            <person name="Del Rio T.G."/>
            <person name="Hammon N."/>
            <person name="Dalin E."/>
            <person name="Tice H."/>
            <person name="Pitluck S."/>
            <person name="Bruce D."/>
            <person name="Goodwin L."/>
            <person name="Han C."/>
            <person name="Tapia R."/>
            <person name="Saunders E."/>
            <person name="Schmutz J."/>
            <person name="Brettin T."/>
            <person name="Larimer F."/>
            <person name="Land M."/>
            <person name="Hauser L."/>
            <person name="Vargas C."/>
            <person name="Nieto J.J."/>
            <person name="Kyrpides N.C."/>
            <person name="Ivanova N."/>
            <person name="Goker M."/>
            <person name="Klenk H.P."/>
            <person name="Csonka L.N."/>
            <person name="Woyke T."/>
        </authorList>
    </citation>
    <scope>NUCLEOTIDE SEQUENCE [LARGE SCALE GENOMIC DNA]</scope>
    <source>
        <strain>ATCC BAA-138 / DSM 3043 / CIP 106854 / NCIMB 13768 / 1H11</strain>
    </source>
</reference>
<keyword id="KW-0067">ATP-binding</keyword>
<keyword id="KW-0119">Carbohydrate metabolism</keyword>
<keyword id="KW-0418">Kinase</keyword>
<keyword id="KW-0547">Nucleotide-binding</keyword>
<keyword id="KW-1185">Reference proteome</keyword>
<keyword id="KW-0808">Transferase</keyword>